<feature type="chain" id="PRO_1000200094" description="Probable transcriptional regulatory protein Ddes_0536">
    <location>
        <begin position="1"/>
        <end position="245"/>
    </location>
</feature>
<feature type="region of interest" description="Disordered" evidence="2">
    <location>
        <begin position="1"/>
        <end position="21"/>
    </location>
</feature>
<reference key="1">
    <citation type="submission" date="2009-01" db="EMBL/GenBank/DDBJ databases">
        <title>Complete sequence of Desulfovibrio desulfuricans subsp. desulfuricans str. ATCC 27774.</title>
        <authorList>
            <consortium name="US DOE Joint Genome Institute"/>
            <person name="Lucas S."/>
            <person name="Copeland A."/>
            <person name="Lapidus A."/>
            <person name="Glavina del Rio T."/>
            <person name="Tice H."/>
            <person name="Bruce D."/>
            <person name="Goodwin L."/>
            <person name="Pitluck S."/>
            <person name="Sims D."/>
            <person name="Lu M."/>
            <person name="Kiss H."/>
            <person name="Meineke L."/>
            <person name="Brettin T."/>
            <person name="Detter J.C."/>
            <person name="Han C."/>
            <person name="Larimer F."/>
            <person name="Land M."/>
            <person name="Hauser L."/>
            <person name="Kyrpides N."/>
            <person name="Ovchinnikova G."/>
            <person name="Hazen T.C."/>
        </authorList>
    </citation>
    <scope>NUCLEOTIDE SEQUENCE [LARGE SCALE GENOMIC DNA]</scope>
    <source>
        <strain>ATCC 27774 / DSM 6949 / MB</strain>
    </source>
</reference>
<organism>
    <name type="scientific">Desulfovibrio desulfuricans (strain ATCC 27774 / DSM 6949 / MB)</name>
    <dbReference type="NCBI Taxonomy" id="525146"/>
    <lineage>
        <taxon>Bacteria</taxon>
        <taxon>Pseudomonadati</taxon>
        <taxon>Thermodesulfobacteriota</taxon>
        <taxon>Desulfovibrionia</taxon>
        <taxon>Desulfovibrionales</taxon>
        <taxon>Desulfovibrionaceae</taxon>
        <taxon>Desulfovibrio</taxon>
    </lineage>
</organism>
<proteinExistence type="inferred from homology"/>
<dbReference type="EMBL" id="CP001358">
    <property type="protein sequence ID" value="ACL48447.1"/>
    <property type="molecule type" value="Genomic_DNA"/>
</dbReference>
<dbReference type="SMR" id="B8J4I9"/>
<dbReference type="STRING" id="525146.Ddes_0536"/>
<dbReference type="KEGG" id="dds:Ddes_0536"/>
<dbReference type="eggNOG" id="COG0217">
    <property type="taxonomic scope" value="Bacteria"/>
</dbReference>
<dbReference type="HOGENOM" id="CLU_062974_2_2_7"/>
<dbReference type="GO" id="GO:0005829">
    <property type="term" value="C:cytosol"/>
    <property type="evidence" value="ECO:0007669"/>
    <property type="project" value="TreeGrafter"/>
</dbReference>
<dbReference type="GO" id="GO:0003677">
    <property type="term" value="F:DNA binding"/>
    <property type="evidence" value="ECO:0007669"/>
    <property type="project" value="UniProtKB-UniRule"/>
</dbReference>
<dbReference type="GO" id="GO:0006355">
    <property type="term" value="P:regulation of DNA-templated transcription"/>
    <property type="evidence" value="ECO:0007669"/>
    <property type="project" value="UniProtKB-UniRule"/>
</dbReference>
<dbReference type="FunFam" id="1.10.10.200:FF:000002">
    <property type="entry name" value="Probable transcriptional regulatory protein CLM62_37755"/>
    <property type="match status" value="1"/>
</dbReference>
<dbReference type="FunFam" id="3.30.70.980:FF:000002">
    <property type="entry name" value="Probable transcriptional regulatory protein YebC"/>
    <property type="match status" value="1"/>
</dbReference>
<dbReference type="Gene3D" id="1.10.10.200">
    <property type="match status" value="1"/>
</dbReference>
<dbReference type="Gene3D" id="3.30.70.980">
    <property type="match status" value="2"/>
</dbReference>
<dbReference type="HAMAP" id="MF_00693">
    <property type="entry name" value="Transcrip_reg_TACO1"/>
    <property type="match status" value="1"/>
</dbReference>
<dbReference type="InterPro" id="IPR017856">
    <property type="entry name" value="Integrase-like_N"/>
</dbReference>
<dbReference type="InterPro" id="IPR048300">
    <property type="entry name" value="TACO1_YebC-like_2nd/3rd_dom"/>
</dbReference>
<dbReference type="InterPro" id="IPR049083">
    <property type="entry name" value="TACO1_YebC_N"/>
</dbReference>
<dbReference type="InterPro" id="IPR002876">
    <property type="entry name" value="Transcrip_reg_TACO1-like"/>
</dbReference>
<dbReference type="InterPro" id="IPR026564">
    <property type="entry name" value="Transcrip_reg_TACO1-like_dom3"/>
</dbReference>
<dbReference type="InterPro" id="IPR029072">
    <property type="entry name" value="YebC-like"/>
</dbReference>
<dbReference type="NCBIfam" id="NF001030">
    <property type="entry name" value="PRK00110.1"/>
    <property type="match status" value="1"/>
</dbReference>
<dbReference type="NCBIfam" id="NF009044">
    <property type="entry name" value="PRK12378.1"/>
    <property type="match status" value="1"/>
</dbReference>
<dbReference type="NCBIfam" id="TIGR01033">
    <property type="entry name" value="YebC/PmpR family DNA-binding transcriptional regulator"/>
    <property type="match status" value="1"/>
</dbReference>
<dbReference type="PANTHER" id="PTHR12532:SF6">
    <property type="entry name" value="TRANSCRIPTIONAL REGULATORY PROTEIN YEBC-RELATED"/>
    <property type="match status" value="1"/>
</dbReference>
<dbReference type="PANTHER" id="PTHR12532">
    <property type="entry name" value="TRANSLATIONAL ACTIVATOR OF CYTOCHROME C OXIDASE 1"/>
    <property type="match status" value="1"/>
</dbReference>
<dbReference type="Pfam" id="PF20772">
    <property type="entry name" value="TACO1_YebC_N"/>
    <property type="match status" value="1"/>
</dbReference>
<dbReference type="Pfam" id="PF01709">
    <property type="entry name" value="Transcrip_reg"/>
    <property type="match status" value="1"/>
</dbReference>
<dbReference type="SUPFAM" id="SSF75625">
    <property type="entry name" value="YebC-like"/>
    <property type="match status" value="1"/>
</dbReference>
<sequence length="245" mass="26394">MAGHSKWANIQHRKGRQDAKRGKLFTKAAKEIIIAAKGGGDPSMNPRLRAAIAAAKAVNLPKDKIEAAIRKGTGEDAGGDLTETFYEGYGPGGIAVMVEVATDNKNRTVAEVRHLFSKHGGSMGENGSVAWMFDRKGVISVEKSAYPEEKIMEAALEAGADDVIDDGEEWTIHTAMTDFTAVRDSLETAGIVMQSAELAMVPQNLVAVDADMGQKVLRLMDALDDNDDVQNVYANVDFPEDMPED</sequence>
<keyword id="KW-0963">Cytoplasm</keyword>
<keyword id="KW-0238">DNA-binding</keyword>
<keyword id="KW-0804">Transcription</keyword>
<keyword id="KW-0805">Transcription regulation</keyword>
<protein>
    <recommendedName>
        <fullName evidence="1">Probable transcriptional regulatory protein Ddes_0536</fullName>
    </recommendedName>
</protein>
<gene>
    <name type="ordered locus">Ddes_0536</name>
</gene>
<comment type="subcellular location">
    <subcellularLocation>
        <location evidence="1">Cytoplasm</location>
    </subcellularLocation>
</comment>
<comment type="similarity">
    <text evidence="1">Belongs to the TACO1 family.</text>
</comment>
<evidence type="ECO:0000255" key="1">
    <source>
        <dbReference type="HAMAP-Rule" id="MF_00693"/>
    </source>
</evidence>
<evidence type="ECO:0000256" key="2">
    <source>
        <dbReference type="SAM" id="MobiDB-lite"/>
    </source>
</evidence>
<name>Y536_DESDA</name>
<accession>B8J4I9</accession>